<organism>
    <name type="scientific">Cupriavidus taiwanensis (strain DSM 17343 / BCRC 17206 / CCUG 44338 / CIP 107171 / LMG 19424 / R1)</name>
    <name type="common">Ralstonia taiwanensis (strain LMG 19424)</name>
    <dbReference type="NCBI Taxonomy" id="977880"/>
    <lineage>
        <taxon>Bacteria</taxon>
        <taxon>Pseudomonadati</taxon>
        <taxon>Pseudomonadota</taxon>
        <taxon>Betaproteobacteria</taxon>
        <taxon>Burkholderiales</taxon>
        <taxon>Burkholderiaceae</taxon>
        <taxon>Cupriavidus</taxon>
    </lineage>
</organism>
<proteinExistence type="inferred from homology"/>
<reference key="1">
    <citation type="journal article" date="2008" name="Genome Res.">
        <title>Genome sequence of the beta-rhizobium Cupriavidus taiwanensis and comparative genomics of rhizobia.</title>
        <authorList>
            <person name="Amadou C."/>
            <person name="Pascal G."/>
            <person name="Mangenot S."/>
            <person name="Glew M."/>
            <person name="Bontemps C."/>
            <person name="Capela D."/>
            <person name="Carrere S."/>
            <person name="Cruveiller S."/>
            <person name="Dossat C."/>
            <person name="Lajus A."/>
            <person name="Marchetti M."/>
            <person name="Poinsot V."/>
            <person name="Rouy Z."/>
            <person name="Servin B."/>
            <person name="Saad M."/>
            <person name="Schenowitz C."/>
            <person name="Barbe V."/>
            <person name="Batut J."/>
            <person name="Medigue C."/>
            <person name="Masson-Boivin C."/>
        </authorList>
    </citation>
    <scope>NUCLEOTIDE SEQUENCE [LARGE SCALE GENOMIC DNA]</scope>
    <source>
        <strain>DSM 17343 / BCRC 17206 / CCUG 44338 / CIP 107171 / LMG 19424 / R1</strain>
    </source>
</reference>
<sequence length="966" mass="108366">MSDDKRAKSDKNEKNKYPVNLLDTPFPMRGDLPKREPQWVKQWQDKQLYKKIRAARKGAKKFVLHDGPPYANGDIHIGHAVNKVLKDMIIKARGLTGLDAVYVPGWDCHGMPIEIQIEKKFGKGLPVQEVQAKARAYATEQIKRQMVDFERLGVLGDWDHPYLTMNYRNEADELRALGKIMEKGYVFRGLKPVNWCFDCGSALAEAEVEYKDKVDLSIDVGFPFAEADKLAHAFKVPVEQIDARPGWIVIWTTTPWTIPSNQALNVHPEVEYALVDTPRGHLILATERVEEQLKVYALEGKVIATATGAALSEIRFHHPLAKMDGGYDRLSPIYLGDYVTTDTGSGIVHSAPAYGVEDFQSCKAHGMPDSDIISPVMGNGVYAGTLPLFGGLSIWDANPRIVEALQESGNLFNSHKYTHSYMHCWRHKTPIIYRATSQWFAGMDVDPAEENGKPVPTLRETALAGIDATEFYPAWGKQRLHNMIANRPDWTLSRQRQWGVPMAFFVHKETGALHPRTPELLEAIAKRVEQQGIEAWQTLDPAELLGDEASQYEKNRDTLDVWFDSGTTHWTVIRGSHRDDLYDPSADEADGRLADLYLEGSDQHRGWFHSSLLTASMLYGKPPYKALLTHGFTVDGEGRKMSKSIGNTVSPQDIANKMGAEIIRLWVASTDYSGELSISDEILKRVVESYRRIRNTLRFLLSNLSDYDHGKHALPAAEWLEIDRYAVALTAQLQKEVLSHYEAYEFHPVVAKLQTFCSEDLGGFYLDVLKDRLYTTAPDSKARRAAQNALYHITQAMLHWMAPFLSFTAEEAWQVFAHGTAHTDTIFTSTYYAVPEVDDADDLLQKWHTLREVRAEVTRQLEAVRVEGEIGSSLQAELTIQAGGPVLEALQSLGDDLRFVLLTSAAKVTAAPEAGDLLVTVTPSAHAKCERCWHYRADVGHNPDHPTLCGRCDSNLFGAGEHRSHA</sequence>
<protein>
    <recommendedName>
        <fullName evidence="1">Isoleucine--tRNA ligase</fullName>
        <ecNumber evidence="1">6.1.1.5</ecNumber>
    </recommendedName>
    <alternativeName>
        <fullName evidence="1">Isoleucyl-tRNA synthetase</fullName>
        <shortName evidence="1">IleRS</shortName>
    </alternativeName>
</protein>
<accession>B3R6E8</accession>
<dbReference type="EC" id="6.1.1.5" evidence="1"/>
<dbReference type="EMBL" id="CU633749">
    <property type="protein sequence ID" value="CAQ70452.1"/>
    <property type="molecule type" value="Genomic_DNA"/>
</dbReference>
<dbReference type="RefSeq" id="WP_012353750.1">
    <property type="nucleotide sequence ID" value="NC_010528.1"/>
</dbReference>
<dbReference type="SMR" id="B3R6E8"/>
<dbReference type="GeneID" id="29761966"/>
<dbReference type="KEGG" id="cti:RALTA_A2521"/>
<dbReference type="eggNOG" id="COG0060">
    <property type="taxonomic scope" value="Bacteria"/>
</dbReference>
<dbReference type="HOGENOM" id="CLU_001493_7_1_4"/>
<dbReference type="BioCyc" id="CTAI977880:RALTA_RS12255-MONOMER"/>
<dbReference type="Proteomes" id="UP000001692">
    <property type="component" value="Chromosome 1"/>
</dbReference>
<dbReference type="GO" id="GO:0005829">
    <property type="term" value="C:cytosol"/>
    <property type="evidence" value="ECO:0007669"/>
    <property type="project" value="TreeGrafter"/>
</dbReference>
<dbReference type="GO" id="GO:0002161">
    <property type="term" value="F:aminoacyl-tRNA deacylase activity"/>
    <property type="evidence" value="ECO:0007669"/>
    <property type="project" value="InterPro"/>
</dbReference>
<dbReference type="GO" id="GO:0005524">
    <property type="term" value="F:ATP binding"/>
    <property type="evidence" value="ECO:0007669"/>
    <property type="project" value="UniProtKB-UniRule"/>
</dbReference>
<dbReference type="GO" id="GO:0004822">
    <property type="term" value="F:isoleucine-tRNA ligase activity"/>
    <property type="evidence" value="ECO:0007669"/>
    <property type="project" value="UniProtKB-UniRule"/>
</dbReference>
<dbReference type="GO" id="GO:0000049">
    <property type="term" value="F:tRNA binding"/>
    <property type="evidence" value="ECO:0007669"/>
    <property type="project" value="InterPro"/>
</dbReference>
<dbReference type="GO" id="GO:0008270">
    <property type="term" value="F:zinc ion binding"/>
    <property type="evidence" value="ECO:0007669"/>
    <property type="project" value="UniProtKB-UniRule"/>
</dbReference>
<dbReference type="GO" id="GO:0006428">
    <property type="term" value="P:isoleucyl-tRNA aminoacylation"/>
    <property type="evidence" value="ECO:0007669"/>
    <property type="project" value="UniProtKB-UniRule"/>
</dbReference>
<dbReference type="CDD" id="cd07960">
    <property type="entry name" value="Anticodon_Ia_Ile_BEm"/>
    <property type="match status" value="1"/>
</dbReference>
<dbReference type="CDD" id="cd00818">
    <property type="entry name" value="IleRS_core"/>
    <property type="match status" value="1"/>
</dbReference>
<dbReference type="FunFam" id="3.40.50.620:FF:000042">
    <property type="entry name" value="Isoleucine--tRNA ligase"/>
    <property type="match status" value="1"/>
</dbReference>
<dbReference type="FunFam" id="3.40.50.620:FF:000048">
    <property type="entry name" value="Isoleucine--tRNA ligase"/>
    <property type="match status" value="1"/>
</dbReference>
<dbReference type="Gene3D" id="1.10.730.20">
    <property type="match status" value="1"/>
</dbReference>
<dbReference type="Gene3D" id="3.40.50.620">
    <property type="entry name" value="HUPs"/>
    <property type="match status" value="2"/>
</dbReference>
<dbReference type="Gene3D" id="3.90.740.10">
    <property type="entry name" value="Valyl/Leucyl/Isoleucyl-tRNA synthetase, editing domain"/>
    <property type="match status" value="1"/>
</dbReference>
<dbReference type="HAMAP" id="MF_02002">
    <property type="entry name" value="Ile_tRNA_synth_type1"/>
    <property type="match status" value="1"/>
</dbReference>
<dbReference type="InterPro" id="IPR001412">
    <property type="entry name" value="aa-tRNA-synth_I_CS"/>
</dbReference>
<dbReference type="InterPro" id="IPR002300">
    <property type="entry name" value="aa-tRNA-synth_Ia"/>
</dbReference>
<dbReference type="InterPro" id="IPR033708">
    <property type="entry name" value="Anticodon_Ile_BEm"/>
</dbReference>
<dbReference type="InterPro" id="IPR002301">
    <property type="entry name" value="Ile-tRNA-ligase"/>
</dbReference>
<dbReference type="InterPro" id="IPR023585">
    <property type="entry name" value="Ile-tRNA-ligase_type1"/>
</dbReference>
<dbReference type="InterPro" id="IPR050081">
    <property type="entry name" value="Ile-tRNA_ligase"/>
</dbReference>
<dbReference type="InterPro" id="IPR013155">
    <property type="entry name" value="M/V/L/I-tRNA-synth_anticd-bd"/>
</dbReference>
<dbReference type="InterPro" id="IPR014729">
    <property type="entry name" value="Rossmann-like_a/b/a_fold"/>
</dbReference>
<dbReference type="InterPro" id="IPR009080">
    <property type="entry name" value="tRNAsynth_Ia_anticodon-bd"/>
</dbReference>
<dbReference type="InterPro" id="IPR009008">
    <property type="entry name" value="Val/Leu/Ile-tRNA-synth_edit"/>
</dbReference>
<dbReference type="InterPro" id="IPR010663">
    <property type="entry name" value="Znf_FPG/IleRS"/>
</dbReference>
<dbReference type="NCBIfam" id="TIGR00392">
    <property type="entry name" value="ileS"/>
    <property type="match status" value="1"/>
</dbReference>
<dbReference type="PANTHER" id="PTHR42765:SF1">
    <property type="entry name" value="ISOLEUCINE--TRNA LIGASE, MITOCHONDRIAL"/>
    <property type="match status" value="1"/>
</dbReference>
<dbReference type="PANTHER" id="PTHR42765">
    <property type="entry name" value="SOLEUCYL-TRNA SYNTHETASE"/>
    <property type="match status" value="1"/>
</dbReference>
<dbReference type="Pfam" id="PF08264">
    <property type="entry name" value="Anticodon_1"/>
    <property type="match status" value="1"/>
</dbReference>
<dbReference type="Pfam" id="PF00133">
    <property type="entry name" value="tRNA-synt_1"/>
    <property type="match status" value="1"/>
</dbReference>
<dbReference type="Pfam" id="PF06827">
    <property type="entry name" value="zf-FPG_IleRS"/>
    <property type="match status" value="1"/>
</dbReference>
<dbReference type="PRINTS" id="PR00984">
    <property type="entry name" value="TRNASYNTHILE"/>
</dbReference>
<dbReference type="SUPFAM" id="SSF47323">
    <property type="entry name" value="Anticodon-binding domain of a subclass of class I aminoacyl-tRNA synthetases"/>
    <property type="match status" value="1"/>
</dbReference>
<dbReference type="SUPFAM" id="SSF52374">
    <property type="entry name" value="Nucleotidylyl transferase"/>
    <property type="match status" value="1"/>
</dbReference>
<dbReference type="SUPFAM" id="SSF50677">
    <property type="entry name" value="ValRS/IleRS/LeuRS editing domain"/>
    <property type="match status" value="1"/>
</dbReference>
<dbReference type="PROSITE" id="PS00178">
    <property type="entry name" value="AA_TRNA_LIGASE_I"/>
    <property type="match status" value="1"/>
</dbReference>
<name>SYI_CUPTR</name>
<gene>
    <name evidence="1" type="primary">ileS</name>
    <name type="ordered locus">RALTA_A2521</name>
</gene>
<comment type="function">
    <text evidence="1">Catalyzes the attachment of isoleucine to tRNA(Ile). As IleRS can inadvertently accommodate and process structurally similar amino acids such as valine, to avoid such errors it has two additional distinct tRNA(Ile)-dependent editing activities. One activity is designated as 'pretransfer' editing and involves the hydrolysis of activated Val-AMP. The other activity is designated 'posttransfer' editing and involves deacylation of mischarged Val-tRNA(Ile).</text>
</comment>
<comment type="catalytic activity">
    <reaction evidence="1">
        <text>tRNA(Ile) + L-isoleucine + ATP = L-isoleucyl-tRNA(Ile) + AMP + diphosphate</text>
        <dbReference type="Rhea" id="RHEA:11060"/>
        <dbReference type="Rhea" id="RHEA-COMP:9666"/>
        <dbReference type="Rhea" id="RHEA-COMP:9695"/>
        <dbReference type="ChEBI" id="CHEBI:30616"/>
        <dbReference type="ChEBI" id="CHEBI:33019"/>
        <dbReference type="ChEBI" id="CHEBI:58045"/>
        <dbReference type="ChEBI" id="CHEBI:78442"/>
        <dbReference type="ChEBI" id="CHEBI:78528"/>
        <dbReference type="ChEBI" id="CHEBI:456215"/>
        <dbReference type="EC" id="6.1.1.5"/>
    </reaction>
</comment>
<comment type="cofactor">
    <cofactor evidence="1">
        <name>Zn(2+)</name>
        <dbReference type="ChEBI" id="CHEBI:29105"/>
    </cofactor>
    <text evidence="1">Binds 1 zinc ion per subunit.</text>
</comment>
<comment type="subunit">
    <text evidence="1">Monomer.</text>
</comment>
<comment type="subcellular location">
    <subcellularLocation>
        <location evidence="1">Cytoplasm</location>
    </subcellularLocation>
</comment>
<comment type="domain">
    <text evidence="1">IleRS has two distinct active sites: one for aminoacylation and one for editing. The misactivated valine is translocated from the active site to the editing site, which sterically excludes the correctly activated isoleucine. The single editing site contains two valyl binding pockets, one specific for each substrate (Val-AMP or Val-tRNA(Ile)).</text>
</comment>
<comment type="similarity">
    <text evidence="1">Belongs to the class-I aminoacyl-tRNA synthetase family. IleS type 1 subfamily.</text>
</comment>
<evidence type="ECO:0000255" key="1">
    <source>
        <dbReference type="HAMAP-Rule" id="MF_02002"/>
    </source>
</evidence>
<evidence type="ECO:0000256" key="2">
    <source>
        <dbReference type="SAM" id="MobiDB-lite"/>
    </source>
</evidence>
<keyword id="KW-0030">Aminoacyl-tRNA synthetase</keyword>
<keyword id="KW-0067">ATP-binding</keyword>
<keyword id="KW-0963">Cytoplasm</keyword>
<keyword id="KW-0436">Ligase</keyword>
<keyword id="KW-0479">Metal-binding</keyword>
<keyword id="KW-0547">Nucleotide-binding</keyword>
<keyword id="KW-0648">Protein biosynthesis</keyword>
<keyword id="KW-0862">Zinc</keyword>
<feature type="chain" id="PRO_1000189144" description="Isoleucine--tRNA ligase">
    <location>
        <begin position="1"/>
        <end position="966"/>
    </location>
</feature>
<feature type="region of interest" description="Disordered" evidence="2">
    <location>
        <begin position="1"/>
        <end position="24"/>
    </location>
</feature>
<feature type="short sequence motif" description="'HIGH' region">
    <location>
        <begin position="69"/>
        <end position="79"/>
    </location>
</feature>
<feature type="short sequence motif" description="'KMSKS' region">
    <location>
        <begin position="640"/>
        <end position="644"/>
    </location>
</feature>
<feature type="compositionally biased region" description="Basic and acidic residues" evidence="2">
    <location>
        <begin position="1"/>
        <end position="16"/>
    </location>
</feature>
<feature type="binding site" evidence="1">
    <location>
        <position position="599"/>
    </location>
    <ligand>
        <name>L-isoleucyl-5'-AMP</name>
        <dbReference type="ChEBI" id="CHEBI:178002"/>
    </ligand>
</feature>
<feature type="binding site" evidence="1">
    <location>
        <position position="643"/>
    </location>
    <ligand>
        <name>ATP</name>
        <dbReference type="ChEBI" id="CHEBI:30616"/>
    </ligand>
</feature>
<feature type="binding site" evidence="1">
    <location>
        <position position="929"/>
    </location>
    <ligand>
        <name>Zn(2+)</name>
        <dbReference type="ChEBI" id="CHEBI:29105"/>
    </ligand>
</feature>
<feature type="binding site" evidence="1">
    <location>
        <position position="932"/>
    </location>
    <ligand>
        <name>Zn(2+)</name>
        <dbReference type="ChEBI" id="CHEBI:29105"/>
    </ligand>
</feature>
<feature type="binding site" evidence="1">
    <location>
        <position position="949"/>
    </location>
    <ligand>
        <name>Zn(2+)</name>
        <dbReference type="ChEBI" id="CHEBI:29105"/>
    </ligand>
</feature>
<feature type="binding site" evidence="1">
    <location>
        <position position="952"/>
    </location>
    <ligand>
        <name>Zn(2+)</name>
        <dbReference type="ChEBI" id="CHEBI:29105"/>
    </ligand>
</feature>